<protein>
    <recommendedName>
        <fullName>Calpain-A</fullName>
        <ecNumber>3.4.22.-</ecNumber>
    </recommendedName>
    <alternativeName>
        <fullName>Calcium-activated neutral proteinase A</fullName>
        <shortName>CANP A</shortName>
    </alternativeName>
    <component>
        <recommendedName>
            <fullName>Calpain-A catalytic subunit</fullName>
        </recommendedName>
    </component>
</protein>
<dbReference type="EC" id="3.4.22.-"/>
<dbReference type="EMBL" id="X78555">
    <property type="protein sequence ID" value="CAA55298.1"/>
    <property type="molecule type" value="mRNA"/>
</dbReference>
<dbReference type="EMBL" id="X78555">
    <property type="protein sequence ID" value="CAA55297.1"/>
    <property type="status" value="ALT_INIT"/>
    <property type="molecule type" value="mRNA"/>
</dbReference>
<dbReference type="EMBL" id="Z46891">
    <property type="protein sequence ID" value="CAA86993.1"/>
    <property type="molecule type" value="mRNA"/>
</dbReference>
<dbReference type="EMBL" id="Z46892">
    <property type="protein sequence ID" value="CAA86994.1"/>
    <property type="molecule type" value="mRNA"/>
</dbReference>
<dbReference type="EMBL" id="AE013599">
    <property type="protein sequence ID" value="AAF57563.1"/>
    <property type="molecule type" value="Genomic_DNA"/>
</dbReference>
<dbReference type="EMBL" id="AE013599">
    <property type="protein sequence ID" value="AAF57564.1"/>
    <property type="molecule type" value="Genomic_DNA"/>
</dbReference>
<dbReference type="EMBL" id="AY051678">
    <property type="protein sequence ID" value="AAK93102.1"/>
    <property type="molecule type" value="mRNA"/>
</dbReference>
<dbReference type="RefSeq" id="NP_001097378.1">
    <molecule id="Q11002-1"/>
    <property type="nucleotide sequence ID" value="NM_001103908.2"/>
</dbReference>
<dbReference type="RefSeq" id="NP_477047.1">
    <molecule id="Q11002-1"/>
    <property type="nucleotide sequence ID" value="NM_057699.5"/>
</dbReference>
<dbReference type="RefSeq" id="NP_477048.1">
    <molecule id="Q11002-2"/>
    <property type="nucleotide sequence ID" value="NM_057700.4"/>
</dbReference>
<dbReference type="SMR" id="Q11002"/>
<dbReference type="BioGRID" id="62895">
    <property type="interactions" value="7"/>
</dbReference>
<dbReference type="DIP" id="DIP-23245N"/>
<dbReference type="FunCoup" id="Q11002">
    <property type="interactions" value="165"/>
</dbReference>
<dbReference type="IntAct" id="Q11002">
    <property type="interactions" value="5"/>
</dbReference>
<dbReference type="STRING" id="7227.FBpp0309435"/>
<dbReference type="MEROPS" id="C02.014"/>
<dbReference type="SwissPalm" id="Q11002"/>
<dbReference type="PaxDb" id="7227-FBpp0085714"/>
<dbReference type="DNASU" id="37232"/>
<dbReference type="EnsemblMetazoa" id="FBtr0086529">
    <molecule id="Q11002-1"/>
    <property type="protein sequence ID" value="FBpp0085714"/>
    <property type="gene ID" value="FBgn0012051"/>
</dbReference>
<dbReference type="EnsemblMetazoa" id="FBtr0086530">
    <molecule id="Q11002-2"/>
    <property type="protein sequence ID" value="FBpp0085715"/>
    <property type="gene ID" value="FBgn0012051"/>
</dbReference>
<dbReference type="EnsemblMetazoa" id="FBtr0112869">
    <molecule id="Q11002-1"/>
    <property type="protein sequence ID" value="FBpp0111782"/>
    <property type="gene ID" value="FBgn0012051"/>
</dbReference>
<dbReference type="GeneID" id="37232"/>
<dbReference type="KEGG" id="dme:Dmel_CG7563"/>
<dbReference type="AGR" id="FB:FBgn0012051"/>
<dbReference type="CTD" id="37232"/>
<dbReference type="FlyBase" id="FBgn0012051">
    <property type="gene designation" value="CalpA"/>
</dbReference>
<dbReference type="VEuPathDB" id="VectorBase:FBgn0012051"/>
<dbReference type="eggNOG" id="KOG0045">
    <property type="taxonomic scope" value="Eukaryota"/>
</dbReference>
<dbReference type="GeneTree" id="ENSGT00940000158966"/>
<dbReference type="HOGENOM" id="CLU_010982_0_1_1"/>
<dbReference type="InParanoid" id="Q11002"/>
<dbReference type="OrthoDB" id="424753at2759"/>
<dbReference type="PhylomeDB" id="Q11002"/>
<dbReference type="BRENDA" id="3.4.22.B36">
    <property type="organism ID" value="1994"/>
</dbReference>
<dbReference type="Reactome" id="R-DME-6798695">
    <property type="pathway name" value="Neutrophil degranulation"/>
</dbReference>
<dbReference type="BioGRID-ORCS" id="37232">
    <property type="hits" value="0 hits in 3 CRISPR screens"/>
</dbReference>
<dbReference type="GenomeRNAi" id="37232"/>
<dbReference type="PRO" id="PR:Q11002"/>
<dbReference type="Proteomes" id="UP000000803">
    <property type="component" value="Chromosome 2R"/>
</dbReference>
<dbReference type="Bgee" id="FBgn0012051">
    <property type="expression patterns" value="Expressed in nociceptive neuron in imaginal disc-derived wing and 201 other cell types or tissues"/>
</dbReference>
<dbReference type="ExpressionAtlas" id="Q11002">
    <property type="expression patterns" value="baseline and differential"/>
</dbReference>
<dbReference type="GO" id="GO:0015629">
    <property type="term" value="C:actin cytoskeleton"/>
    <property type="evidence" value="ECO:0000314"/>
    <property type="project" value="UniProtKB"/>
</dbReference>
<dbReference type="GO" id="GO:0005737">
    <property type="term" value="C:cytoplasm"/>
    <property type="evidence" value="ECO:0000318"/>
    <property type="project" value="GO_Central"/>
</dbReference>
<dbReference type="GO" id="GO:0005783">
    <property type="term" value="C:endoplasmic reticulum"/>
    <property type="evidence" value="ECO:0000314"/>
    <property type="project" value="FlyBase"/>
</dbReference>
<dbReference type="GO" id="GO:0005794">
    <property type="term" value="C:Golgi apparatus"/>
    <property type="evidence" value="ECO:0000314"/>
    <property type="project" value="FlyBase"/>
</dbReference>
<dbReference type="GO" id="GO:0043025">
    <property type="term" value="C:neuronal cell body"/>
    <property type="evidence" value="ECO:0000314"/>
    <property type="project" value="UniProtKB"/>
</dbReference>
<dbReference type="GO" id="GO:0005509">
    <property type="term" value="F:calcium ion binding"/>
    <property type="evidence" value="ECO:0000303"/>
    <property type="project" value="UniProtKB"/>
</dbReference>
<dbReference type="GO" id="GO:0004198">
    <property type="term" value="F:calcium-dependent cysteine-type endopeptidase activity"/>
    <property type="evidence" value="ECO:0000314"/>
    <property type="project" value="UniProtKB"/>
</dbReference>
<dbReference type="GO" id="GO:0042335">
    <property type="term" value="P:cuticle development"/>
    <property type="evidence" value="ECO:0000314"/>
    <property type="project" value="FlyBase"/>
</dbReference>
<dbReference type="GO" id="GO:0050832">
    <property type="term" value="P:defense response to fungus"/>
    <property type="evidence" value="ECO:0000315"/>
    <property type="project" value="FlyBase"/>
</dbReference>
<dbReference type="GO" id="GO:0008340">
    <property type="term" value="P:determination of adult lifespan"/>
    <property type="evidence" value="ECO:0000315"/>
    <property type="project" value="FlyBase"/>
</dbReference>
<dbReference type="GO" id="GO:0009953">
    <property type="term" value="P:dorsal/ventral pattern formation"/>
    <property type="evidence" value="ECO:0000314"/>
    <property type="project" value="FlyBase"/>
</dbReference>
<dbReference type="GO" id="GO:0008345">
    <property type="term" value="P:larval locomotory behavior"/>
    <property type="evidence" value="ECO:0000315"/>
    <property type="project" value="FlyBase"/>
</dbReference>
<dbReference type="GO" id="GO:0007520">
    <property type="term" value="P:myoblast fusion"/>
    <property type="evidence" value="ECO:0000315"/>
    <property type="project" value="FlyBase"/>
</dbReference>
<dbReference type="GO" id="GO:0016322">
    <property type="term" value="P:neuron remodeling"/>
    <property type="evidence" value="ECO:0000315"/>
    <property type="project" value="FlyBase"/>
</dbReference>
<dbReference type="GO" id="GO:0016540">
    <property type="term" value="P:protein autoprocessing"/>
    <property type="evidence" value="ECO:0000314"/>
    <property type="project" value="FlyBase"/>
</dbReference>
<dbReference type="GO" id="GO:0006508">
    <property type="term" value="P:proteolysis"/>
    <property type="evidence" value="ECO:0000314"/>
    <property type="project" value="UniProtKB"/>
</dbReference>
<dbReference type="CDD" id="cd00214">
    <property type="entry name" value="Calpain_III"/>
    <property type="match status" value="1"/>
</dbReference>
<dbReference type="CDD" id="cd00044">
    <property type="entry name" value="CysPc"/>
    <property type="match status" value="1"/>
</dbReference>
<dbReference type="CDD" id="cd16196">
    <property type="entry name" value="EFh_PEF_CalpA_B"/>
    <property type="match status" value="1"/>
</dbReference>
<dbReference type="FunFam" id="2.60.120.380:FF:000001">
    <property type="entry name" value="Calpain-1 catalytic subunit"/>
    <property type="match status" value="1"/>
</dbReference>
<dbReference type="FunFam" id="3.90.70.10:FF:000001">
    <property type="entry name" value="Calpain-1 catalytic subunit"/>
    <property type="match status" value="1"/>
</dbReference>
<dbReference type="FunFam" id="1.10.238.10:FF:000241">
    <property type="entry name" value="Calpain-A, isoform C"/>
    <property type="match status" value="1"/>
</dbReference>
<dbReference type="Gene3D" id="2.60.120.380">
    <property type="match status" value="1"/>
</dbReference>
<dbReference type="Gene3D" id="3.90.70.10">
    <property type="entry name" value="Cysteine proteinases"/>
    <property type="match status" value="1"/>
</dbReference>
<dbReference type="Gene3D" id="1.10.238.10">
    <property type="entry name" value="EF-hand"/>
    <property type="match status" value="1"/>
</dbReference>
<dbReference type="InterPro" id="IPR033883">
    <property type="entry name" value="C2_III"/>
</dbReference>
<dbReference type="InterPro" id="IPR022684">
    <property type="entry name" value="Calpain_cysteine_protease"/>
</dbReference>
<dbReference type="InterPro" id="IPR022682">
    <property type="entry name" value="Calpain_domain_III"/>
</dbReference>
<dbReference type="InterPro" id="IPR022683">
    <property type="entry name" value="Calpain_III"/>
</dbReference>
<dbReference type="InterPro" id="IPR036213">
    <property type="entry name" value="Calpain_III_sf"/>
</dbReference>
<dbReference type="InterPro" id="IPR011992">
    <property type="entry name" value="EF-hand-dom_pair"/>
</dbReference>
<dbReference type="InterPro" id="IPR018247">
    <property type="entry name" value="EF_Hand_1_Ca_BS"/>
</dbReference>
<dbReference type="InterPro" id="IPR002048">
    <property type="entry name" value="EF_hand_dom"/>
</dbReference>
<dbReference type="InterPro" id="IPR038765">
    <property type="entry name" value="Papain-like_cys_pep_sf"/>
</dbReference>
<dbReference type="InterPro" id="IPR000169">
    <property type="entry name" value="Pept_cys_AS"/>
</dbReference>
<dbReference type="InterPro" id="IPR001300">
    <property type="entry name" value="Peptidase_C2_calpain_cat"/>
</dbReference>
<dbReference type="PANTHER" id="PTHR10183">
    <property type="entry name" value="CALPAIN"/>
    <property type="match status" value="1"/>
</dbReference>
<dbReference type="PANTHER" id="PTHR10183:SF433">
    <property type="entry name" value="CALPAIN-A-RELATED"/>
    <property type="match status" value="1"/>
</dbReference>
<dbReference type="Pfam" id="PF01067">
    <property type="entry name" value="Calpain_III"/>
    <property type="match status" value="1"/>
</dbReference>
<dbReference type="Pfam" id="PF00648">
    <property type="entry name" value="Peptidase_C2"/>
    <property type="match status" value="1"/>
</dbReference>
<dbReference type="PRINTS" id="PR00704">
    <property type="entry name" value="CALPAIN"/>
</dbReference>
<dbReference type="SMART" id="SM00720">
    <property type="entry name" value="calpain_III"/>
    <property type="match status" value="1"/>
</dbReference>
<dbReference type="SMART" id="SM00230">
    <property type="entry name" value="CysPc"/>
    <property type="match status" value="1"/>
</dbReference>
<dbReference type="SMART" id="SM00054">
    <property type="entry name" value="EFh"/>
    <property type="match status" value="2"/>
</dbReference>
<dbReference type="SUPFAM" id="SSF49758">
    <property type="entry name" value="Calpain large subunit, middle domain (domain III)"/>
    <property type="match status" value="1"/>
</dbReference>
<dbReference type="SUPFAM" id="SSF54001">
    <property type="entry name" value="Cysteine proteinases"/>
    <property type="match status" value="1"/>
</dbReference>
<dbReference type="SUPFAM" id="SSF47473">
    <property type="entry name" value="EF-hand"/>
    <property type="match status" value="1"/>
</dbReference>
<dbReference type="PROSITE" id="PS50203">
    <property type="entry name" value="CALPAIN_CAT"/>
    <property type="match status" value="1"/>
</dbReference>
<dbReference type="PROSITE" id="PS00018">
    <property type="entry name" value="EF_HAND_1"/>
    <property type="match status" value="1"/>
</dbReference>
<dbReference type="PROSITE" id="PS50222">
    <property type="entry name" value="EF_HAND_2"/>
    <property type="match status" value="5"/>
</dbReference>
<dbReference type="PROSITE" id="PS00139">
    <property type="entry name" value="THIOL_PROTEASE_CYS"/>
    <property type="match status" value="1"/>
</dbReference>
<proteinExistence type="evidence at protein level"/>
<keyword id="KW-0025">Alternative splicing</keyword>
<keyword id="KW-0068">Autocatalytic cleavage</keyword>
<keyword id="KW-0106">Calcium</keyword>
<keyword id="KW-0963">Cytoplasm</keyword>
<keyword id="KW-0903">Direct protein sequencing</keyword>
<keyword id="KW-0378">Hydrolase</keyword>
<keyword id="KW-0479">Metal-binding</keyword>
<keyword id="KW-0645">Protease</keyword>
<keyword id="KW-1185">Reference proteome</keyword>
<keyword id="KW-0677">Repeat</keyword>
<keyword id="KW-0788">Thiol protease</keyword>
<comment type="function">
    <text evidence="4 6">Calcium-regulated non-lysosomal thiol-protease. Involved in the organization of the actin-related cytoskeleton during embryogenesis.</text>
</comment>
<comment type="activity regulation">
    <text evidence="4">Activated by millimolar concentrations of calcium, and by phosphatidylinositol 4,5-diphosphate, phosphatidylinositol 4-monophosphate, phosphatidylinositol and phosphatidic acid.</text>
</comment>
<comment type="subcellular location">
    <subcellularLocation>
        <location evidence="5">Cytoplasm</location>
    </subcellularLocation>
</comment>
<comment type="alternative products">
    <event type="alternative splicing"/>
    <isoform>
        <id>Q11002-1</id>
        <name>B</name>
        <sequence type="displayed"/>
    </isoform>
    <isoform>
        <id>Q11002-2</id>
        <name>A</name>
        <sequence type="described" ref="VSP_005244 VSP_005245"/>
    </isoform>
    <text>Additional isoforms seem to exist.</text>
</comment>
<comment type="tissue specificity">
    <text evidence="5 6">Localized to the anterior and posterior embryonic poles just after fertilization. Becomes distributed around the polar buds and just below the pole cells of the posterior pole during cleavage cycles. During these nuclear divisions anterior localization disappears. Localized to actin caps that underlie the plasma membrane, immediately above each nucleus at cleavage cycles 8 and 9. Localized to a small set of nerve, midgut and blood cells in adults.</text>
</comment>
<comment type="PTM">
    <text>Undergoes calcium-dependent autolytic cleavage between Lys-54 and Asn-55, which is necessary for activation of the protein.</text>
</comment>
<comment type="miscellaneous">
    <text>This protein binds calcium.</text>
</comment>
<comment type="similarity">
    <text evidence="8">Belongs to the peptidase C2 family.</text>
</comment>
<comment type="sequence caution" evidence="8">
    <conflict type="erroneous initiation">
        <sequence resource="EMBL-CDS" id="CAA55297"/>
    </conflict>
</comment>
<organism>
    <name type="scientific">Drosophila melanogaster</name>
    <name type="common">Fruit fly</name>
    <dbReference type="NCBI Taxonomy" id="7227"/>
    <lineage>
        <taxon>Eukaryota</taxon>
        <taxon>Metazoa</taxon>
        <taxon>Ecdysozoa</taxon>
        <taxon>Arthropoda</taxon>
        <taxon>Hexapoda</taxon>
        <taxon>Insecta</taxon>
        <taxon>Pterygota</taxon>
        <taxon>Neoptera</taxon>
        <taxon>Endopterygota</taxon>
        <taxon>Diptera</taxon>
        <taxon>Brachycera</taxon>
        <taxon>Muscomorpha</taxon>
        <taxon>Ephydroidea</taxon>
        <taxon>Drosophilidae</taxon>
        <taxon>Drosophila</taxon>
        <taxon>Sophophora</taxon>
    </lineage>
</organism>
<name>CANA_DROME</name>
<sequence length="828" mass="93963">MDDLRGFLRQAGQEFLNAAGEAAMGAAKDVVGSVINEIFIKKEADTKRVLPSIKNMRVLGEKSSSLGPYSEVQDYETILNSCLASGSLFEDPLFPASNESLQFSRRPDRHIEWLRPHEIAENPQFFVEGYSRFDVQQGELGDCWLLAATANLTQESNLFFRVIPAEQSFEENYAGIFHFRFWQYGKWVDVIIDDRLPTYNGELMYMHSTEKNEFWSALLEKAYAKLHGSYEALKGGSTCEAMEDFTGGVSEWYDLKEAPGNLFTILQKAAERNSMMGCSIEPDPNVTEAETPQGLIRGHAYSITKVCLIDIVTPNRQGKIPMIRMRNPWGNEAEWNGPWSDSSPEWRYIPEEQKAEIGLTFDRDGEFWMSFQDFLNHFDRVEICNLSPDSLTEDQQNSGKRKWEMSMYEGEWTPGVTAGGCRNFLDTFWHNPQYIITLVDPDEEDEEGQCTVIVALMQKNRRSKRNMGMECLTIGFAIYSLNDRELENRPQGLNFFRYKSSVGRSPHFINTREVCARFKLPPGHYLIVPSTFDPNEEGEFIIRVFSETQNNMEENDDHVGYGGKADTITPGFPTPKPIDPQKEGLRRLFDSIAGKDMEVDWMELKRILDHSMRDDLPKPVVFNRFSNNMAFETQAAGPGDDGAGACGLLSLICGPFLKGTPFEEQLGMNDQSNKRLIGDNPADGGPVTANAIVDETHGFSKDVCRSMVAMLDADKSGKLGFEEFETLLSEIAKWKAIFKVYDVENTGRVSGFQLREALNSAGYHLNNRVLNVLGHRYGSRDGKIAFDDFIMCAVKIKTYIDIFKERDTEKNETATFTLEEWIERTIYS</sequence>
<feature type="chain" id="PRO_0000026497" description="Calpain-A">
    <location>
        <begin position="1"/>
        <end position="828"/>
    </location>
</feature>
<feature type="chain" id="PRO_0000026498" description="Calpain-A catalytic subunit">
    <location>
        <begin position="55"/>
        <end position="828"/>
    </location>
</feature>
<feature type="domain" description="EF-hand 1" evidence="3">
    <location>
        <begin position="1"/>
        <end position="14"/>
    </location>
</feature>
<feature type="domain" description="Calpain catalytic" evidence="2">
    <location>
        <begin position="88"/>
        <end position="387"/>
    </location>
</feature>
<feature type="domain" description="EF-hand 2" evidence="3">
    <location>
        <begin position="579"/>
        <end position="614"/>
    </location>
</feature>
<feature type="domain" description="EF-hand 3" evidence="3">
    <location>
        <begin position="699"/>
        <end position="734"/>
    </location>
</feature>
<feature type="domain" description="EF-hand 4" evidence="3">
    <location>
        <begin position="729"/>
        <end position="764"/>
    </location>
</feature>
<feature type="domain" description="EF-hand 5" evidence="3">
    <location>
        <begin position="764"/>
        <end position="799"/>
    </location>
</feature>
<feature type="region of interest" description="Domain III">
    <location>
        <begin position="388"/>
        <end position="557"/>
    </location>
</feature>
<feature type="region of interest" description="Linker">
    <location>
        <begin position="558"/>
        <end position="577"/>
    </location>
</feature>
<feature type="region of interest" description="Domain IV">
    <location>
        <begin position="578"/>
        <end position="828"/>
    </location>
</feature>
<feature type="active site" evidence="1">
    <location>
        <position position="143"/>
    </location>
</feature>
<feature type="active site" evidence="1">
    <location>
        <position position="299"/>
    </location>
</feature>
<feature type="active site" evidence="1">
    <location>
        <position position="327"/>
    </location>
</feature>
<feature type="binding site" evidence="3">
    <location>
        <position position="712"/>
    </location>
    <ligand>
        <name>Ca(2+)</name>
        <dbReference type="ChEBI" id="CHEBI:29108"/>
        <label>1</label>
    </ligand>
</feature>
<feature type="binding site" evidence="3">
    <location>
        <position position="714"/>
    </location>
    <ligand>
        <name>Ca(2+)</name>
        <dbReference type="ChEBI" id="CHEBI:29108"/>
        <label>1</label>
    </ligand>
</feature>
<feature type="binding site" evidence="3">
    <location>
        <position position="716"/>
    </location>
    <ligand>
        <name>Ca(2+)</name>
        <dbReference type="ChEBI" id="CHEBI:29108"/>
        <label>1</label>
    </ligand>
</feature>
<feature type="binding site" evidence="3">
    <location>
        <position position="718"/>
    </location>
    <ligand>
        <name>Ca(2+)</name>
        <dbReference type="ChEBI" id="CHEBI:29108"/>
        <label>1</label>
    </ligand>
</feature>
<feature type="binding site" evidence="3">
    <location>
        <position position="723"/>
    </location>
    <ligand>
        <name>Ca(2+)</name>
        <dbReference type="ChEBI" id="CHEBI:29108"/>
        <label>1</label>
    </ligand>
</feature>
<feature type="binding site" evidence="8">
    <location>
        <position position="742"/>
    </location>
    <ligand>
        <name>Ca(2+)</name>
        <dbReference type="ChEBI" id="CHEBI:29108"/>
        <label>2</label>
    </ligand>
</feature>
<feature type="binding site" evidence="8">
    <location>
        <position position="746"/>
    </location>
    <ligand>
        <name>Ca(2+)</name>
        <dbReference type="ChEBI" id="CHEBI:29108"/>
        <label>2</label>
    </ligand>
</feature>
<feature type="binding site" evidence="8">
    <location>
        <position position="748"/>
    </location>
    <ligand>
        <name>Ca(2+)</name>
        <dbReference type="ChEBI" id="CHEBI:29108"/>
        <label>2</label>
    </ligand>
</feature>
<feature type="binding site" evidence="8">
    <location>
        <position position="753"/>
    </location>
    <ligand>
        <name>Ca(2+)</name>
        <dbReference type="ChEBI" id="CHEBI:29108"/>
        <label>2</label>
    </ligand>
</feature>
<feature type="site" description="Cleavage; by autolysis">
    <location>
        <begin position="54"/>
        <end position="55"/>
    </location>
</feature>
<feature type="splice variant" id="VSP_005244" description="In isoform A." evidence="7">
    <original>ENDDHVGYGGKA</original>
    <variation>CVQVDNDNEFVY</variation>
    <location>
        <begin position="554"/>
        <end position="565"/>
    </location>
</feature>
<feature type="splice variant" id="VSP_005245" description="In isoform A." evidence="7">
    <location>
        <begin position="566"/>
        <end position="828"/>
    </location>
</feature>
<feature type="sequence conflict" description="In Ref. 2; CAA86993/CAA86994." evidence="8" ref="2">
    <original>I</original>
    <variation>Y</variation>
    <location>
        <position position="35"/>
    </location>
</feature>
<feature type="sequence conflict" description="In Ref. 2; CAA86994." evidence="8" ref="2">
    <original>V</original>
    <variation>I</variation>
    <location>
        <position position="306"/>
    </location>
</feature>
<feature type="sequence conflict" description="In Ref. 1; CAA55298/CAA55297." evidence="8" ref="1">
    <original>N</original>
    <variation>H</variation>
    <location>
        <position position="397"/>
    </location>
</feature>
<feature type="sequence conflict" description="In Ref. 2; CAA86994." evidence="8" ref="2">
    <original>CVQVDNDNEFVY</original>
    <variation>RTSRQ</variation>
    <location sequence="Q11002-2">
        <begin position="554"/>
        <end position="565"/>
    </location>
</feature>
<gene>
    <name type="primary">CalpA</name>
    <name type="ORF">CG7563</name>
</gene>
<accession>Q11002</accession>
<accession>Q9V8U6</accession>
<accession>Q9V8U7</accession>
<evidence type="ECO:0000250" key="1"/>
<evidence type="ECO:0000255" key="2">
    <source>
        <dbReference type="PROSITE-ProRule" id="PRU00239"/>
    </source>
</evidence>
<evidence type="ECO:0000255" key="3">
    <source>
        <dbReference type="PROSITE-ProRule" id="PRU00448"/>
    </source>
</evidence>
<evidence type="ECO:0000269" key="4">
    <source>
    </source>
</evidence>
<evidence type="ECO:0000269" key="5">
    <source>
    </source>
</evidence>
<evidence type="ECO:0000269" key="6">
    <source>
    </source>
</evidence>
<evidence type="ECO:0000303" key="7">
    <source>
    </source>
</evidence>
<evidence type="ECO:0000305" key="8"/>
<reference key="1">
    <citation type="journal article" date="1994" name="J. Biol. Chem.">
        <title>Calpain localization changes in coordination with actin-related cytoskeletal changes during early embryonic development of Drosophila.</title>
        <authorList>
            <person name="Emori Y."/>
            <person name="Saigo K."/>
        </authorList>
    </citation>
    <scope>NUCLEOTIDE SEQUENCE [MRNA] (ISOFORM B)</scope>
    <scope>FUNCTION</scope>
    <scope>TISSUE SPECIFICITY</scope>
    <source>
        <strain>Canton-S</strain>
        <tissue>Larva</tissue>
    </source>
</reference>
<reference key="2">
    <citation type="journal article" date="1995" name="Mol. Cell. Biol.">
        <title>CalpA, a Drosophila calpain homolog specifically expressed in a small set of nerve, midgut, and blood cells.</title>
        <authorList>
            <person name="Theopold U."/>
            <person name="Pinter M."/>
            <person name="Daffre S."/>
            <person name="Tryselius Y."/>
            <person name="Friedrich P."/>
            <person name="Nassel D.R."/>
            <person name="Hultmark D."/>
        </authorList>
    </citation>
    <scope>NUCLEOTIDE SEQUENCE [MRNA] (ISOFORMS A AND B)</scope>
    <scope>SUBCELLULAR LOCATION</scope>
    <scope>TISSUE SPECIFICITY</scope>
    <source>
        <strain>Canton-S</strain>
    </source>
</reference>
<reference key="3">
    <citation type="journal article" date="2000" name="Science">
        <title>The genome sequence of Drosophila melanogaster.</title>
        <authorList>
            <person name="Adams M.D."/>
            <person name="Celniker S.E."/>
            <person name="Holt R.A."/>
            <person name="Evans C.A."/>
            <person name="Gocayne J.D."/>
            <person name="Amanatides P.G."/>
            <person name="Scherer S.E."/>
            <person name="Li P.W."/>
            <person name="Hoskins R.A."/>
            <person name="Galle R.F."/>
            <person name="George R.A."/>
            <person name="Lewis S.E."/>
            <person name="Richards S."/>
            <person name="Ashburner M."/>
            <person name="Henderson S.N."/>
            <person name="Sutton G.G."/>
            <person name="Wortman J.R."/>
            <person name="Yandell M.D."/>
            <person name="Zhang Q."/>
            <person name="Chen L.X."/>
            <person name="Brandon R.C."/>
            <person name="Rogers Y.-H.C."/>
            <person name="Blazej R.G."/>
            <person name="Champe M."/>
            <person name="Pfeiffer B.D."/>
            <person name="Wan K.H."/>
            <person name="Doyle C."/>
            <person name="Baxter E.G."/>
            <person name="Helt G."/>
            <person name="Nelson C.R."/>
            <person name="Miklos G.L.G."/>
            <person name="Abril J.F."/>
            <person name="Agbayani A."/>
            <person name="An H.-J."/>
            <person name="Andrews-Pfannkoch C."/>
            <person name="Baldwin D."/>
            <person name="Ballew R.M."/>
            <person name="Basu A."/>
            <person name="Baxendale J."/>
            <person name="Bayraktaroglu L."/>
            <person name="Beasley E.M."/>
            <person name="Beeson K.Y."/>
            <person name="Benos P.V."/>
            <person name="Berman B.P."/>
            <person name="Bhandari D."/>
            <person name="Bolshakov S."/>
            <person name="Borkova D."/>
            <person name="Botchan M.R."/>
            <person name="Bouck J."/>
            <person name="Brokstein P."/>
            <person name="Brottier P."/>
            <person name="Burtis K.C."/>
            <person name="Busam D.A."/>
            <person name="Butler H."/>
            <person name="Cadieu E."/>
            <person name="Center A."/>
            <person name="Chandra I."/>
            <person name="Cherry J.M."/>
            <person name="Cawley S."/>
            <person name="Dahlke C."/>
            <person name="Davenport L.B."/>
            <person name="Davies P."/>
            <person name="de Pablos B."/>
            <person name="Delcher A."/>
            <person name="Deng Z."/>
            <person name="Mays A.D."/>
            <person name="Dew I."/>
            <person name="Dietz S.M."/>
            <person name="Dodson K."/>
            <person name="Doup L.E."/>
            <person name="Downes M."/>
            <person name="Dugan-Rocha S."/>
            <person name="Dunkov B.C."/>
            <person name="Dunn P."/>
            <person name="Durbin K.J."/>
            <person name="Evangelista C.C."/>
            <person name="Ferraz C."/>
            <person name="Ferriera S."/>
            <person name="Fleischmann W."/>
            <person name="Fosler C."/>
            <person name="Gabrielian A.E."/>
            <person name="Garg N.S."/>
            <person name="Gelbart W.M."/>
            <person name="Glasser K."/>
            <person name="Glodek A."/>
            <person name="Gong F."/>
            <person name="Gorrell J.H."/>
            <person name="Gu Z."/>
            <person name="Guan P."/>
            <person name="Harris M."/>
            <person name="Harris N.L."/>
            <person name="Harvey D.A."/>
            <person name="Heiman T.J."/>
            <person name="Hernandez J.R."/>
            <person name="Houck J."/>
            <person name="Hostin D."/>
            <person name="Houston K.A."/>
            <person name="Howland T.J."/>
            <person name="Wei M.-H."/>
            <person name="Ibegwam C."/>
            <person name="Jalali M."/>
            <person name="Kalush F."/>
            <person name="Karpen G.H."/>
            <person name="Ke Z."/>
            <person name="Kennison J.A."/>
            <person name="Ketchum K.A."/>
            <person name="Kimmel B.E."/>
            <person name="Kodira C.D."/>
            <person name="Kraft C.L."/>
            <person name="Kravitz S."/>
            <person name="Kulp D."/>
            <person name="Lai Z."/>
            <person name="Lasko P."/>
            <person name="Lei Y."/>
            <person name="Levitsky A.A."/>
            <person name="Li J.H."/>
            <person name="Li Z."/>
            <person name="Liang Y."/>
            <person name="Lin X."/>
            <person name="Liu X."/>
            <person name="Mattei B."/>
            <person name="McIntosh T.C."/>
            <person name="McLeod M.P."/>
            <person name="McPherson D."/>
            <person name="Merkulov G."/>
            <person name="Milshina N.V."/>
            <person name="Mobarry C."/>
            <person name="Morris J."/>
            <person name="Moshrefi A."/>
            <person name="Mount S.M."/>
            <person name="Moy M."/>
            <person name="Murphy B."/>
            <person name="Murphy L."/>
            <person name="Muzny D.M."/>
            <person name="Nelson D.L."/>
            <person name="Nelson D.R."/>
            <person name="Nelson K.A."/>
            <person name="Nixon K."/>
            <person name="Nusskern D.R."/>
            <person name="Pacleb J.M."/>
            <person name="Palazzolo M."/>
            <person name="Pittman G.S."/>
            <person name="Pan S."/>
            <person name="Pollard J."/>
            <person name="Puri V."/>
            <person name="Reese M.G."/>
            <person name="Reinert K."/>
            <person name="Remington K."/>
            <person name="Saunders R.D.C."/>
            <person name="Scheeler F."/>
            <person name="Shen H."/>
            <person name="Shue B.C."/>
            <person name="Siden-Kiamos I."/>
            <person name="Simpson M."/>
            <person name="Skupski M.P."/>
            <person name="Smith T.J."/>
            <person name="Spier E."/>
            <person name="Spradling A.C."/>
            <person name="Stapleton M."/>
            <person name="Strong R."/>
            <person name="Sun E."/>
            <person name="Svirskas R."/>
            <person name="Tector C."/>
            <person name="Turner R."/>
            <person name="Venter E."/>
            <person name="Wang A.H."/>
            <person name="Wang X."/>
            <person name="Wang Z.-Y."/>
            <person name="Wassarman D.A."/>
            <person name="Weinstock G.M."/>
            <person name="Weissenbach J."/>
            <person name="Williams S.M."/>
            <person name="Woodage T."/>
            <person name="Worley K.C."/>
            <person name="Wu D."/>
            <person name="Yang S."/>
            <person name="Yao Q.A."/>
            <person name="Ye J."/>
            <person name="Yeh R.-F."/>
            <person name="Zaveri J.S."/>
            <person name="Zhan M."/>
            <person name="Zhang G."/>
            <person name="Zhao Q."/>
            <person name="Zheng L."/>
            <person name="Zheng X.H."/>
            <person name="Zhong F.N."/>
            <person name="Zhong W."/>
            <person name="Zhou X."/>
            <person name="Zhu S.C."/>
            <person name="Zhu X."/>
            <person name="Smith H.O."/>
            <person name="Gibbs R.A."/>
            <person name="Myers E.W."/>
            <person name="Rubin G.M."/>
            <person name="Venter J.C."/>
        </authorList>
    </citation>
    <scope>NUCLEOTIDE SEQUENCE [LARGE SCALE GENOMIC DNA]</scope>
    <source>
        <strain>Berkeley</strain>
    </source>
</reference>
<reference key="4">
    <citation type="journal article" date="2002" name="Genome Biol.">
        <title>Annotation of the Drosophila melanogaster euchromatic genome: a systematic review.</title>
        <authorList>
            <person name="Misra S."/>
            <person name="Crosby M.A."/>
            <person name="Mungall C.J."/>
            <person name="Matthews B.B."/>
            <person name="Campbell K.S."/>
            <person name="Hradecky P."/>
            <person name="Huang Y."/>
            <person name="Kaminker J.S."/>
            <person name="Millburn G.H."/>
            <person name="Prochnik S.E."/>
            <person name="Smith C.D."/>
            <person name="Tupy J.L."/>
            <person name="Whitfield E.J."/>
            <person name="Bayraktaroglu L."/>
            <person name="Berman B.P."/>
            <person name="Bettencourt B.R."/>
            <person name="Celniker S.E."/>
            <person name="de Grey A.D.N.J."/>
            <person name="Drysdale R.A."/>
            <person name="Harris N.L."/>
            <person name="Richter J."/>
            <person name="Russo S."/>
            <person name="Schroeder A.J."/>
            <person name="Shu S.Q."/>
            <person name="Stapleton M."/>
            <person name="Yamada C."/>
            <person name="Ashburner M."/>
            <person name="Gelbart W.M."/>
            <person name="Rubin G.M."/>
            <person name="Lewis S.E."/>
        </authorList>
    </citation>
    <scope>GENOME REANNOTATION</scope>
    <source>
        <strain>Berkeley</strain>
    </source>
</reference>
<reference key="5">
    <citation type="journal article" date="2002" name="Genome Biol.">
        <title>A Drosophila full-length cDNA resource.</title>
        <authorList>
            <person name="Stapleton M."/>
            <person name="Carlson J.W."/>
            <person name="Brokstein P."/>
            <person name="Yu C."/>
            <person name="Champe M."/>
            <person name="George R.A."/>
            <person name="Guarin H."/>
            <person name="Kronmiller B."/>
            <person name="Pacleb J.M."/>
            <person name="Park S."/>
            <person name="Wan K.H."/>
            <person name="Rubin G.M."/>
            <person name="Celniker S.E."/>
        </authorList>
    </citation>
    <scope>NUCLEOTIDE SEQUENCE [LARGE SCALE MRNA] (ISOFORM B)</scope>
    <source>
        <strain>Berkeley</strain>
        <tissue>Embryo</tissue>
    </source>
</reference>
<reference key="6">
    <citation type="journal article" date="1999" name="J. Biol. Chem.">
        <title>Characterization of two recombinant Drosophila calpains. CALPA and a novel homolog, CALPB.</title>
        <authorList>
            <person name="Jekely G."/>
            <person name="Friedrich P."/>
        </authorList>
    </citation>
    <scope>PARTIAL PROTEIN SEQUENCE</scope>
    <scope>FUNCTION</scope>
    <scope>ACTIVITY REGULATION</scope>
    <scope>AUTOCATALYTIC CLEAVAGE</scope>
</reference>